<protein>
    <recommendedName>
        <fullName>ATP-sensitive inward rectifier potassium channel 10</fullName>
    </recommendedName>
    <alternativeName>
        <fullName>ATP-dependent inwardly rectifying potassium channel Kir4.1</fullName>
    </alternativeName>
    <alternativeName>
        <fullName evidence="15">Inward rectifier K(+) channel Kir1.2</fullName>
    </alternativeName>
    <alternativeName>
        <fullName>Potassium channel, inwardly rectifying subfamily J member 10</fullName>
    </alternativeName>
</protein>
<organism>
    <name type="scientific">Homo sapiens</name>
    <name type="common">Human</name>
    <dbReference type="NCBI Taxonomy" id="9606"/>
    <lineage>
        <taxon>Eukaryota</taxon>
        <taxon>Metazoa</taxon>
        <taxon>Chordata</taxon>
        <taxon>Craniata</taxon>
        <taxon>Vertebrata</taxon>
        <taxon>Euteleostomi</taxon>
        <taxon>Mammalia</taxon>
        <taxon>Eutheria</taxon>
        <taxon>Euarchontoglires</taxon>
        <taxon>Primates</taxon>
        <taxon>Haplorrhini</taxon>
        <taxon>Catarrhini</taxon>
        <taxon>Hominidae</taxon>
        <taxon>Homo</taxon>
    </lineage>
</organism>
<name>KCJ10_HUMAN</name>
<reference key="1">
    <citation type="journal article" date="1997" name="J. Biol. Chem.">
        <title>Cloning and characterization of two K+ inward rectifier (Kir) 1.1 potassium channel homologs from human kidney (Kir1.2 and Kir1.3).</title>
        <authorList>
            <person name="Shuck M.E."/>
            <person name="Piser T.M."/>
            <person name="Bock J.H."/>
            <person name="Slightom J.L."/>
            <person name="Lee K.S."/>
            <person name="Bienkowski M.J."/>
        </authorList>
    </citation>
    <scope>NUCLEOTIDE SEQUENCE [GENOMIC DNA]</scope>
    <scope>NUCLEOTIDE SEQUENCE [MRNA] OF 143-379</scope>
    <scope>FUNCTION</scope>
    <scope>TRANSPORTER ACTIVITY</scope>
    <scope>ACTIVITY REGULATION</scope>
    <source>
        <tissue>Kidney</tissue>
    </source>
</reference>
<reference key="2">
    <citation type="journal article" date="1999" name="Cell. Signal.">
        <title>Co-expression of human Kir3 subunits can yield channels with different functional properties.</title>
        <authorList>
            <person name="Schoots O."/>
            <person name="Wilson J.M."/>
            <person name="Ethier N."/>
            <person name="Bigras E."/>
            <person name="Hebert T.E."/>
            <person name="Van Tol H.H.M."/>
        </authorList>
    </citation>
    <scope>NUCLEOTIDE SEQUENCE [MRNA]</scope>
    <scope>VARIANT CYS-271</scope>
    <source>
        <tissue>Cerebellum</tissue>
    </source>
</reference>
<reference key="3">
    <citation type="journal article" date="2006" name="Nature">
        <title>The DNA sequence and biological annotation of human chromosome 1.</title>
        <authorList>
            <person name="Gregory S.G."/>
            <person name="Barlow K.F."/>
            <person name="McLay K.E."/>
            <person name="Kaul R."/>
            <person name="Swarbreck D."/>
            <person name="Dunham A."/>
            <person name="Scott C.E."/>
            <person name="Howe K.L."/>
            <person name="Woodfine K."/>
            <person name="Spencer C.C.A."/>
            <person name="Jones M.C."/>
            <person name="Gillson C."/>
            <person name="Searle S."/>
            <person name="Zhou Y."/>
            <person name="Kokocinski F."/>
            <person name="McDonald L."/>
            <person name="Evans R."/>
            <person name="Phillips K."/>
            <person name="Atkinson A."/>
            <person name="Cooper R."/>
            <person name="Jones C."/>
            <person name="Hall R.E."/>
            <person name="Andrews T.D."/>
            <person name="Lloyd C."/>
            <person name="Ainscough R."/>
            <person name="Almeida J.P."/>
            <person name="Ambrose K.D."/>
            <person name="Anderson F."/>
            <person name="Andrew R.W."/>
            <person name="Ashwell R.I.S."/>
            <person name="Aubin K."/>
            <person name="Babbage A.K."/>
            <person name="Bagguley C.L."/>
            <person name="Bailey J."/>
            <person name="Beasley H."/>
            <person name="Bethel G."/>
            <person name="Bird C.P."/>
            <person name="Bray-Allen S."/>
            <person name="Brown J.Y."/>
            <person name="Brown A.J."/>
            <person name="Buckley D."/>
            <person name="Burton J."/>
            <person name="Bye J."/>
            <person name="Carder C."/>
            <person name="Chapman J.C."/>
            <person name="Clark S.Y."/>
            <person name="Clarke G."/>
            <person name="Clee C."/>
            <person name="Cobley V."/>
            <person name="Collier R.E."/>
            <person name="Corby N."/>
            <person name="Coville G.J."/>
            <person name="Davies J."/>
            <person name="Deadman R."/>
            <person name="Dunn M."/>
            <person name="Earthrowl M."/>
            <person name="Ellington A.G."/>
            <person name="Errington H."/>
            <person name="Frankish A."/>
            <person name="Frankland J."/>
            <person name="French L."/>
            <person name="Garner P."/>
            <person name="Garnett J."/>
            <person name="Gay L."/>
            <person name="Ghori M.R.J."/>
            <person name="Gibson R."/>
            <person name="Gilby L.M."/>
            <person name="Gillett W."/>
            <person name="Glithero R.J."/>
            <person name="Grafham D.V."/>
            <person name="Griffiths C."/>
            <person name="Griffiths-Jones S."/>
            <person name="Grocock R."/>
            <person name="Hammond S."/>
            <person name="Harrison E.S.I."/>
            <person name="Hart E."/>
            <person name="Haugen E."/>
            <person name="Heath P.D."/>
            <person name="Holmes S."/>
            <person name="Holt K."/>
            <person name="Howden P.J."/>
            <person name="Hunt A.R."/>
            <person name="Hunt S.E."/>
            <person name="Hunter G."/>
            <person name="Isherwood J."/>
            <person name="James R."/>
            <person name="Johnson C."/>
            <person name="Johnson D."/>
            <person name="Joy A."/>
            <person name="Kay M."/>
            <person name="Kershaw J.K."/>
            <person name="Kibukawa M."/>
            <person name="Kimberley A.M."/>
            <person name="King A."/>
            <person name="Knights A.J."/>
            <person name="Lad H."/>
            <person name="Laird G."/>
            <person name="Lawlor S."/>
            <person name="Leongamornlert D.A."/>
            <person name="Lloyd D.M."/>
            <person name="Loveland J."/>
            <person name="Lovell J."/>
            <person name="Lush M.J."/>
            <person name="Lyne R."/>
            <person name="Martin S."/>
            <person name="Mashreghi-Mohammadi M."/>
            <person name="Matthews L."/>
            <person name="Matthews N.S.W."/>
            <person name="McLaren S."/>
            <person name="Milne S."/>
            <person name="Mistry S."/>
            <person name="Moore M.J.F."/>
            <person name="Nickerson T."/>
            <person name="O'Dell C.N."/>
            <person name="Oliver K."/>
            <person name="Palmeiri A."/>
            <person name="Palmer S.A."/>
            <person name="Parker A."/>
            <person name="Patel D."/>
            <person name="Pearce A.V."/>
            <person name="Peck A.I."/>
            <person name="Pelan S."/>
            <person name="Phelps K."/>
            <person name="Phillimore B.J."/>
            <person name="Plumb R."/>
            <person name="Rajan J."/>
            <person name="Raymond C."/>
            <person name="Rouse G."/>
            <person name="Saenphimmachak C."/>
            <person name="Sehra H.K."/>
            <person name="Sheridan E."/>
            <person name="Shownkeen R."/>
            <person name="Sims S."/>
            <person name="Skuce C.D."/>
            <person name="Smith M."/>
            <person name="Steward C."/>
            <person name="Subramanian S."/>
            <person name="Sycamore N."/>
            <person name="Tracey A."/>
            <person name="Tromans A."/>
            <person name="Van Helmond Z."/>
            <person name="Wall M."/>
            <person name="Wallis J.M."/>
            <person name="White S."/>
            <person name="Whitehead S.L."/>
            <person name="Wilkinson J.E."/>
            <person name="Willey D.L."/>
            <person name="Williams H."/>
            <person name="Wilming L."/>
            <person name="Wray P.W."/>
            <person name="Wu Z."/>
            <person name="Coulson A."/>
            <person name="Vaudin M."/>
            <person name="Sulston J.E."/>
            <person name="Durbin R.M."/>
            <person name="Hubbard T."/>
            <person name="Wooster R."/>
            <person name="Dunham I."/>
            <person name="Carter N.P."/>
            <person name="McVean G."/>
            <person name="Ross M.T."/>
            <person name="Harrow J."/>
            <person name="Olson M.V."/>
            <person name="Beck S."/>
            <person name="Rogers J."/>
            <person name="Bentley D.R."/>
        </authorList>
    </citation>
    <scope>NUCLEOTIDE SEQUENCE [LARGE SCALE GENOMIC DNA]</scope>
</reference>
<reference key="4">
    <citation type="submission" date="2005-09" db="EMBL/GenBank/DDBJ databases">
        <authorList>
            <person name="Mural R.J."/>
            <person name="Istrail S."/>
            <person name="Sutton G.G."/>
            <person name="Florea L."/>
            <person name="Halpern A.L."/>
            <person name="Mobarry C.M."/>
            <person name="Lippert R."/>
            <person name="Walenz B."/>
            <person name="Shatkay H."/>
            <person name="Dew I."/>
            <person name="Miller J.R."/>
            <person name="Flanigan M.J."/>
            <person name="Edwards N.J."/>
            <person name="Bolanos R."/>
            <person name="Fasulo D."/>
            <person name="Halldorsson B.V."/>
            <person name="Hannenhalli S."/>
            <person name="Turner R."/>
            <person name="Yooseph S."/>
            <person name="Lu F."/>
            <person name="Nusskern D.R."/>
            <person name="Shue B.C."/>
            <person name="Zheng X.H."/>
            <person name="Zhong F."/>
            <person name="Delcher A.L."/>
            <person name="Huson D.H."/>
            <person name="Kravitz S.A."/>
            <person name="Mouchard L."/>
            <person name="Reinert K."/>
            <person name="Remington K.A."/>
            <person name="Clark A.G."/>
            <person name="Waterman M.S."/>
            <person name="Eichler E.E."/>
            <person name="Adams M.D."/>
            <person name="Hunkapiller M.W."/>
            <person name="Myers E.W."/>
            <person name="Venter J.C."/>
        </authorList>
    </citation>
    <scope>NUCLEOTIDE SEQUENCE [LARGE SCALE GENOMIC DNA]</scope>
</reference>
<reference key="5">
    <citation type="journal article" date="2004" name="Genome Res.">
        <title>The status, quality, and expansion of the NIH full-length cDNA project: the Mammalian Gene Collection (MGC).</title>
        <authorList>
            <consortium name="The MGC Project Team"/>
        </authorList>
    </citation>
    <scope>NUCLEOTIDE SEQUENCE [LARGE SCALE MRNA]</scope>
    <source>
        <tissue>Brain</tissue>
    </source>
</reference>
<reference key="6">
    <citation type="journal article" date="2014" name="FEBS Lett.">
        <title>Mislocalization of K+ channels causes the renal salt wasting in EAST/SeSAME syndrome.</title>
        <authorList>
            <person name="Tanemoto M."/>
            <person name="Abe T."/>
            <person name="Uchida S."/>
            <person name="Kawahara K."/>
        </authorList>
    </citation>
    <scope>FUNCTION</scope>
    <scope>CHARACTERIZATION OF VARIANTS SESAMES PRO-65; ARG-77; ARG-140; ILE-164; VAL-167 AND CYS-297</scope>
    <scope>SUBCELLULAR LOCATION</scope>
    <scope>TISSUE SPECIFICITY</scope>
    <scope>INTERACTION WITH KCNJ16 AND MAGI1</scope>
</reference>
<reference key="7">
    <citation type="journal article" date="2009" name="N. Engl. J. Med.">
        <title>Epilepsy, ataxia, sensorineural deafness, tubulopathy, and KCNJ10 mutations.</title>
        <authorList>
            <person name="Bockenhauer D."/>
            <person name="Feather S."/>
            <person name="Stanescu H.C."/>
            <person name="Bandulik S."/>
            <person name="Zdebik A.A."/>
            <person name="Reichold M."/>
            <person name="Tobin J."/>
            <person name="Lieberer E."/>
            <person name="Sterner C."/>
            <person name="Landoure G."/>
            <person name="Arora R."/>
            <person name="Sirimanna T."/>
            <person name="Thompson D."/>
            <person name="Cross J.H."/>
            <person name="van't Hoff W."/>
            <person name="Al Masri O."/>
            <person name="Tullus K."/>
            <person name="Yeung S."/>
            <person name="Anikster Y."/>
            <person name="Klootwijk E."/>
            <person name="Hubank M."/>
            <person name="Dillon M.J."/>
            <person name="Heitzmann D."/>
            <person name="Arcos-Burgos M."/>
            <person name="Knepper M.A."/>
            <person name="Dobbie A."/>
            <person name="Gahl W.A."/>
            <person name="Warth R."/>
            <person name="Sheridan E."/>
            <person name="Kleta R."/>
        </authorList>
    </citation>
    <scope>VARIANTS SESAMES PRO-65 AND ARG-77</scope>
    <scope>CHARACTERIZATION OF VARIANTS SESAMES PRO-65 AND ARG-77</scope>
    <scope>TRANSPORTER ACTIVITY</scope>
    <scope>INVOLVEMENT IN SESAMES</scope>
</reference>
<reference key="8">
    <citation type="journal article" date="2009" name="Proc. Natl. Acad. Sci. U.S.A.">
        <title>Seizures, sensorineural deafness, ataxia, mental retardation, and electrolyte imbalance (SeSAME syndrome) caused by mutations in KCNJ10.</title>
        <authorList>
            <person name="Scholl U.I."/>
            <person name="Choi M."/>
            <person name="Liu T."/>
            <person name="Ramaekers V.T."/>
            <person name="Hausler M.G."/>
            <person name="Grimmer J."/>
            <person name="Tobe S.W."/>
            <person name="Farhi A."/>
            <person name="Nelson-Williams C."/>
            <person name="Lifton R.P."/>
        </authorList>
    </citation>
    <scope>VARIANTS SESAMES PRO-65; ARG-140; ILE-164; VAL-167; 199-ARG--VAL-379 DEL AND CYS-297</scope>
    <scope>INVOLVEMENT IN SESAMES</scope>
</reference>
<reference key="9">
    <citation type="journal article" date="2010" name="J. Biol. Chem.">
        <title>Molecular mechanisms of EAST/SeSAME syndrome mutations in Kir4.1 (KCNJ10).</title>
        <authorList>
            <person name="Sala-Rabanal M."/>
            <person name="Kucheryavykh L.Y."/>
            <person name="Skatchkov S.N."/>
            <person name="Eaton M.J."/>
            <person name="Nichols C.G."/>
        </authorList>
    </citation>
    <scope>CHARACTERIZATION OF VARIANTS SESAMES ARG-140; ILE-164; VAL-167 AND CYS-297</scope>
</reference>
<reference key="10">
    <citation type="journal article" date="2010" name="Proc. Natl. Acad. Sci. U.S.A.">
        <title>KCNJ10 gene mutations causing EAST syndrome (epilepsy, ataxia, sensorineural deafness, and tubulopathy) disrupt channel function.</title>
        <authorList>
            <person name="Reichold M."/>
            <person name="Zdebik A.A."/>
            <person name="Lieberer E."/>
            <person name="Rapedius M."/>
            <person name="Schmidt K."/>
            <person name="Bandulik S."/>
            <person name="Sterner C."/>
            <person name="Tegtmeier I."/>
            <person name="Penton D."/>
            <person name="Baukrowitz T."/>
            <person name="Hulton S.A."/>
            <person name="Witzgall R."/>
            <person name="Ben-Zeev B."/>
            <person name="Howie A.J."/>
            <person name="Kleta R."/>
            <person name="Bockenhauer D."/>
            <person name="Warth R."/>
        </authorList>
    </citation>
    <scope>VARIANT SESAMES GLN-175</scope>
    <scope>CHARACTERIZATION OF VARIANTS SESAMES PRO-65; ARG-77; GLN-175 AND 199-ARG--VAL-379 DEL</scope>
    <scope>TISSUE SPECIFICITY</scope>
    <scope>ACTIVITY REGULATION</scope>
</reference>
<reference key="11">
    <citation type="journal article" date="2011" name="Nephron Physiol.">
        <title>KCNJ10 mutations disrupt function in patients with EAST syndrome.</title>
        <authorList>
            <person name="Freudenthal B."/>
            <person name="Kulaveerasingam D."/>
            <person name="Lingappa L."/>
            <person name="Shah M.A."/>
            <person name="Brueton L."/>
            <person name="Wassmer E."/>
            <person name="Ognjanovic M."/>
            <person name="Dorison N."/>
            <person name="Reichold M."/>
            <person name="Bockenhauer D."/>
            <person name="Kleta R."/>
            <person name="Zdebik A.A."/>
        </authorList>
    </citation>
    <scope>VARIANTS SESAMES CYS-65 AND LEU-75</scope>
    <scope>CHARACTERIZATION OF VARIANTS SESAMES CYS-65; LEU-75 AND CYS-297</scope>
</reference>
<reference key="12">
    <citation type="journal article" date="2012" name="Epilepsia">
        <title>Targeted next generation sequencing as a diagnostic tool in epileptic disorders.</title>
        <authorList>
            <person name="Lemke J.R."/>
            <person name="Riesch E."/>
            <person name="Scheurenbrand T."/>
            <person name="Schubach M."/>
            <person name="Wilhelm C."/>
            <person name="Steiner I."/>
            <person name="Hansen J."/>
            <person name="Courage C."/>
            <person name="Gallati S."/>
            <person name="Buerki S."/>
            <person name="Strozzi S."/>
            <person name="Simonetti B.G."/>
            <person name="Grunt S."/>
            <person name="Steinlin M."/>
            <person name="Alber M."/>
            <person name="Wolff M."/>
            <person name="Klopstock T."/>
            <person name="Prott E.C."/>
            <person name="Lorenz R."/>
            <person name="Spaich C."/>
            <person name="Rona S."/>
            <person name="Lakshminarasimhan M."/>
            <person name="Kroell J."/>
            <person name="Dorn T."/>
            <person name="Kraemer G."/>
            <person name="Synofzik M."/>
            <person name="Becker F."/>
            <person name="Weber Y.G."/>
            <person name="Lerche H."/>
            <person name="Boehm D."/>
            <person name="Biskup S."/>
        </authorList>
    </citation>
    <scope>VARIANTS SESAMES PRO-68 AND VAL-129</scope>
</reference>
<reference key="13">
    <citation type="journal article" date="2017" name="Hum. Mutat.">
        <title>Mutations in KARS cause early-onset hearing loss and leukoencephalopathy: Potential pathogenic mechanism.</title>
        <authorList>
            <person name="Zhou X.L."/>
            <person name="He L.X."/>
            <person name="Yu L.J."/>
            <person name="Wang Y."/>
            <person name="Wang X.J."/>
            <person name="Wang E.D."/>
            <person name="Yang T."/>
        </authorList>
    </citation>
    <scope>VARIANT HIS-271</scope>
</reference>
<sequence>MTSVAKVYYSQTTQTESRPLMGPGIRRRRVLTKDGRSNVRMEHIADKRFLYLKDLWTTFIDMQWRYKLLLFSATFAGTWFLFGVVWYLVAVAHGDLLELDPPANHTPCVVQVHTLTGAFLFSLESQTTIGYGFRYISEECPLAIVLLIAQLVLTTILEIFITGTFLAKIARPKKRAETIRFSQHAVVASHNGKPCLMIRVANMRKSLLIGCQVTGKLLQTHQTKEGENIRLNQVNVTFQVDTASDSPFLILPLTFYHVVDETSPLKDLPLRSGEGDFELVLILSGTVESTSATCQVRTSYLPEEILWGYEFTPAISLSASGKYIADFSLFDQVVKVASPSGLRDSTVRYGDPEKLKLEESLREQAEKEGSALSVRISNV</sequence>
<evidence type="ECO:0000250" key="1"/>
<evidence type="ECO:0000250" key="2">
    <source>
        <dbReference type="UniProtKB" id="P49655"/>
    </source>
</evidence>
<evidence type="ECO:0000250" key="3">
    <source>
        <dbReference type="UniProtKB" id="Q9JM63"/>
    </source>
</evidence>
<evidence type="ECO:0000255" key="4"/>
<evidence type="ECO:0000269" key="5">
    <source>
    </source>
</evidence>
<evidence type="ECO:0000269" key="6">
    <source>
    </source>
</evidence>
<evidence type="ECO:0000269" key="7">
    <source>
    </source>
</evidence>
<evidence type="ECO:0000269" key="8">
    <source>
    </source>
</evidence>
<evidence type="ECO:0000269" key="9">
    <source>
    </source>
</evidence>
<evidence type="ECO:0000269" key="10">
    <source>
    </source>
</evidence>
<evidence type="ECO:0000269" key="11">
    <source>
    </source>
</evidence>
<evidence type="ECO:0000269" key="12">
    <source>
    </source>
</evidence>
<evidence type="ECO:0000269" key="13">
    <source>
    </source>
</evidence>
<evidence type="ECO:0000269" key="14">
    <source>
    </source>
</evidence>
<evidence type="ECO:0000303" key="15">
    <source>
    </source>
</evidence>
<evidence type="ECO:0000305" key="16"/>
<evidence type="ECO:0000305" key="17">
    <source>
    </source>
</evidence>
<evidence type="ECO:0000312" key="18">
    <source>
        <dbReference type="HGNC" id="HGNC:6256"/>
    </source>
</evidence>
<gene>
    <name evidence="18" type="primary">KCNJ10</name>
</gene>
<dbReference type="EMBL" id="U73192">
    <property type="protein sequence ID" value="AAC50923.1"/>
    <property type="molecule type" value="Genomic_DNA"/>
</dbReference>
<dbReference type="EMBL" id="U73193">
    <property type="protein sequence ID" value="AAC50924.1"/>
    <property type="molecule type" value="mRNA"/>
</dbReference>
<dbReference type="EMBL" id="U52155">
    <property type="protein sequence ID" value="AAB07046.1"/>
    <property type="molecule type" value="mRNA"/>
</dbReference>
<dbReference type="EMBL" id="AL513302">
    <property type="status" value="NOT_ANNOTATED_CDS"/>
    <property type="molecule type" value="Genomic_DNA"/>
</dbReference>
<dbReference type="EMBL" id="CH471121">
    <property type="protein sequence ID" value="EAW52749.1"/>
    <property type="molecule type" value="Genomic_DNA"/>
</dbReference>
<dbReference type="EMBL" id="BC034036">
    <property type="protein sequence ID" value="AAH34036.2"/>
    <property type="status" value="ALT_INIT"/>
    <property type="molecule type" value="mRNA"/>
</dbReference>
<dbReference type="EMBL" id="BC131627">
    <property type="protein sequence ID" value="AAI31628.1"/>
    <property type="molecule type" value="mRNA"/>
</dbReference>
<dbReference type="CCDS" id="CCDS1193.1"/>
<dbReference type="RefSeq" id="NP_002232.2">
    <property type="nucleotide sequence ID" value="NM_002241.4"/>
</dbReference>
<dbReference type="SMR" id="P78508"/>
<dbReference type="BioGRID" id="109968">
    <property type="interactions" value="36"/>
</dbReference>
<dbReference type="CORUM" id="P78508"/>
<dbReference type="FunCoup" id="P78508">
    <property type="interactions" value="85"/>
</dbReference>
<dbReference type="IntAct" id="P78508">
    <property type="interactions" value="30"/>
</dbReference>
<dbReference type="MINT" id="P78508"/>
<dbReference type="STRING" id="9606.ENSP00000495557"/>
<dbReference type="BindingDB" id="P78508"/>
<dbReference type="ChEMBL" id="CHEMBL2146348"/>
<dbReference type="DrugBank" id="DB11148">
    <property type="generic name" value="Butamben"/>
</dbReference>
<dbReference type="DrugBank" id="DB00672">
    <property type="generic name" value="Chlorpropamide"/>
</dbReference>
<dbReference type="DrugBank" id="DB01067">
    <property type="generic name" value="Glipizide"/>
</dbReference>
<dbReference type="DrugBank" id="DB01251">
    <property type="generic name" value="Gliquidone"/>
</dbReference>
<dbReference type="DrugBank" id="DB01289">
    <property type="generic name" value="Glisoxepide"/>
</dbReference>
<dbReference type="DrugBank" id="DB01382">
    <property type="generic name" value="Glymidine"/>
</dbReference>
<dbReference type="DrugBank" id="DB01252">
    <property type="generic name" value="Mitiglinide"/>
</dbReference>
<dbReference type="DrugBank" id="DB00867">
    <property type="generic name" value="Ritodrine"/>
</dbReference>
<dbReference type="DrugBank" id="DB00839">
    <property type="generic name" value="Tolazamide"/>
</dbReference>
<dbReference type="DrugBank" id="DB01392">
    <property type="generic name" value="Yohimbine"/>
</dbReference>
<dbReference type="DrugCentral" id="P78508"/>
<dbReference type="GuidetoPHARMACOLOGY" id="438"/>
<dbReference type="TCDB" id="1.A.2.1.16">
    <property type="family name" value="the inward rectifier k(+) channel (irk-c) family"/>
</dbReference>
<dbReference type="iPTMnet" id="P78508"/>
<dbReference type="PhosphoSitePlus" id="P78508"/>
<dbReference type="BioMuta" id="KCNJ10"/>
<dbReference type="DMDM" id="2493605"/>
<dbReference type="MassIVE" id="P78508"/>
<dbReference type="PaxDb" id="9606-ENSP00000357068"/>
<dbReference type="PeptideAtlas" id="P78508"/>
<dbReference type="ProteomicsDB" id="57627"/>
<dbReference type="TopDownProteomics" id="P78508"/>
<dbReference type="Antibodypedia" id="1679">
    <property type="antibodies" value="284 antibodies from 28 providers"/>
</dbReference>
<dbReference type="DNASU" id="3766"/>
<dbReference type="Ensembl" id="ENST00000638728.1">
    <property type="protein sequence ID" value="ENSP00000492619.1"/>
    <property type="gene ID" value="ENSG00000177807.11"/>
</dbReference>
<dbReference type="Ensembl" id="ENST00000638868.1">
    <property type="protein sequence ID" value="ENSP00000491250.1"/>
    <property type="gene ID" value="ENSG00000177807.11"/>
</dbReference>
<dbReference type="Ensembl" id="ENST00000644903.1">
    <property type="protein sequence ID" value="ENSP00000495557.1"/>
    <property type="gene ID" value="ENSG00000177807.11"/>
</dbReference>
<dbReference type="GeneID" id="3766"/>
<dbReference type="KEGG" id="hsa:3766"/>
<dbReference type="MANE-Select" id="ENST00000644903.1">
    <property type="protein sequence ID" value="ENSP00000495557.1"/>
    <property type="RefSeq nucleotide sequence ID" value="NM_002241.5"/>
    <property type="RefSeq protein sequence ID" value="NP_002232.2"/>
</dbReference>
<dbReference type="UCSC" id="uc001fuw.3">
    <property type="organism name" value="human"/>
</dbReference>
<dbReference type="AGR" id="HGNC:6256"/>
<dbReference type="CTD" id="3766"/>
<dbReference type="DisGeNET" id="3766"/>
<dbReference type="GeneCards" id="KCNJ10"/>
<dbReference type="HGNC" id="HGNC:6256">
    <property type="gene designation" value="KCNJ10"/>
</dbReference>
<dbReference type="HPA" id="ENSG00000177807">
    <property type="expression patterns" value="Tissue enhanced (brain, kidney, retina)"/>
</dbReference>
<dbReference type="MalaCards" id="KCNJ10"/>
<dbReference type="MIM" id="602208">
    <property type="type" value="gene"/>
</dbReference>
<dbReference type="MIM" id="612780">
    <property type="type" value="phenotype"/>
</dbReference>
<dbReference type="neXtProt" id="NX_P78508"/>
<dbReference type="OpenTargets" id="ENSG00000177807"/>
<dbReference type="Orphanet" id="199343">
    <property type="disease" value="EAST syndrome"/>
</dbReference>
<dbReference type="Orphanet" id="705">
    <property type="disease" value="Pendred syndrome"/>
</dbReference>
<dbReference type="PharmGKB" id="PA30043"/>
<dbReference type="VEuPathDB" id="HostDB:ENSG00000177807"/>
<dbReference type="eggNOG" id="KOG3827">
    <property type="taxonomic scope" value="Eukaryota"/>
</dbReference>
<dbReference type="GeneTree" id="ENSGT00990000203615"/>
<dbReference type="HOGENOM" id="CLU_022738_3_3_1"/>
<dbReference type="InParanoid" id="P78508"/>
<dbReference type="OMA" id="QVNVAFQ"/>
<dbReference type="OrthoDB" id="273257at2759"/>
<dbReference type="PAN-GO" id="P78508">
    <property type="GO annotations" value="4 GO annotations based on evolutionary models"/>
</dbReference>
<dbReference type="PhylomeDB" id="P78508"/>
<dbReference type="TreeFam" id="TF313676"/>
<dbReference type="PathwayCommons" id="P78508"/>
<dbReference type="Reactome" id="R-HSA-1296041">
    <property type="pathway name" value="Activation of G protein gated Potassium channels"/>
</dbReference>
<dbReference type="Reactome" id="R-HSA-1296067">
    <property type="pathway name" value="Potassium transport channels"/>
</dbReference>
<dbReference type="Reactome" id="R-HSA-997272">
    <property type="pathway name" value="Inhibition of voltage gated Ca2+ channels via Gbeta/gamma subunits"/>
</dbReference>
<dbReference type="SignaLink" id="P78508"/>
<dbReference type="SIGNOR" id="P78508"/>
<dbReference type="BioGRID-ORCS" id="3766">
    <property type="hits" value="11 hits in 1150 CRISPR screens"/>
</dbReference>
<dbReference type="ChiTaRS" id="KCNJ10">
    <property type="organism name" value="human"/>
</dbReference>
<dbReference type="GeneWiki" id="KCNJ10"/>
<dbReference type="GenomeRNAi" id="3766"/>
<dbReference type="Pharos" id="P78508">
    <property type="development level" value="Tbio"/>
</dbReference>
<dbReference type="PRO" id="PR:P78508"/>
<dbReference type="Proteomes" id="UP000005640">
    <property type="component" value="Chromosome 1"/>
</dbReference>
<dbReference type="RNAct" id="P78508">
    <property type="molecule type" value="protein"/>
</dbReference>
<dbReference type="Bgee" id="ENSG00000177807">
    <property type="expression patterns" value="Expressed in C1 segment of cervical spinal cord and 129 other cell types or tissues"/>
</dbReference>
<dbReference type="ExpressionAtlas" id="P78508">
    <property type="expression patterns" value="baseline and differential"/>
</dbReference>
<dbReference type="GO" id="GO:0097449">
    <property type="term" value="C:astrocyte projection"/>
    <property type="evidence" value="ECO:0000250"/>
    <property type="project" value="ARUK-UCL"/>
</dbReference>
<dbReference type="GO" id="GO:0016323">
    <property type="term" value="C:basolateral plasma membrane"/>
    <property type="evidence" value="ECO:0000314"/>
    <property type="project" value="MGI"/>
</dbReference>
<dbReference type="GO" id="GO:0044297">
    <property type="term" value="C:cell body"/>
    <property type="evidence" value="ECO:0000250"/>
    <property type="project" value="ARUK-UCL"/>
</dbReference>
<dbReference type="GO" id="GO:0097546">
    <property type="term" value="C:ciliary base"/>
    <property type="evidence" value="ECO:0007669"/>
    <property type="project" value="Ensembl"/>
</dbReference>
<dbReference type="GO" id="GO:0034702">
    <property type="term" value="C:monoatomic ion channel complex"/>
    <property type="evidence" value="ECO:0007669"/>
    <property type="project" value="UniProtKB-KW"/>
</dbReference>
<dbReference type="GO" id="GO:0005886">
    <property type="term" value="C:plasma membrane"/>
    <property type="evidence" value="ECO:0000318"/>
    <property type="project" value="GO_Central"/>
</dbReference>
<dbReference type="GO" id="GO:0098793">
    <property type="term" value="C:presynapse"/>
    <property type="evidence" value="ECO:0007669"/>
    <property type="project" value="GOC"/>
</dbReference>
<dbReference type="GO" id="GO:0005524">
    <property type="term" value="F:ATP binding"/>
    <property type="evidence" value="ECO:0007669"/>
    <property type="project" value="UniProtKB-KW"/>
</dbReference>
<dbReference type="GO" id="GO:0015272">
    <property type="term" value="F:ATP-activated inward rectifier potassium channel activity"/>
    <property type="evidence" value="ECO:0000304"/>
    <property type="project" value="ProtInc"/>
</dbReference>
<dbReference type="GO" id="GO:0005242">
    <property type="term" value="F:inward rectifier potassium channel activity"/>
    <property type="evidence" value="ECO:0000315"/>
    <property type="project" value="MGI"/>
</dbReference>
<dbReference type="GO" id="GO:0007628">
    <property type="term" value="P:adult walking behavior"/>
    <property type="evidence" value="ECO:0007669"/>
    <property type="project" value="Ensembl"/>
</dbReference>
<dbReference type="GO" id="GO:0035865">
    <property type="term" value="P:cellular response to potassium ion"/>
    <property type="evidence" value="ECO:0007669"/>
    <property type="project" value="Ensembl"/>
</dbReference>
<dbReference type="GO" id="GO:0022010">
    <property type="term" value="P:central nervous system myelination"/>
    <property type="evidence" value="ECO:0007669"/>
    <property type="project" value="Ensembl"/>
</dbReference>
<dbReference type="GO" id="GO:0051935">
    <property type="term" value="P:glutamate reuptake"/>
    <property type="evidence" value="ECO:0007669"/>
    <property type="project" value="Ensembl"/>
</dbReference>
<dbReference type="GO" id="GO:1905515">
    <property type="term" value="P:non-motile cilium assembly"/>
    <property type="evidence" value="ECO:0007669"/>
    <property type="project" value="Ensembl"/>
</dbReference>
<dbReference type="GO" id="GO:0055075">
    <property type="term" value="P:potassium ion homeostasis"/>
    <property type="evidence" value="ECO:0007669"/>
    <property type="project" value="Ensembl"/>
</dbReference>
<dbReference type="GO" id="GO:1990573">
    <property type="term" value="P:potassium ion import across plasma membrane"/>
    <property type="evidence" value="ECO:0000318"/>
    <property type="project" value="GO_Central"/>
</dbReference>
<dbReference type="GO" id="GO:0071805">
    <property type="term" value="P:potassium ion transmembrane transport"/>
    <property type="evidence" value="ECO:0000315"/>
    <property type="project" value="MGI"/>
</dbReference>
<dbReference type="GO" id="GO:0006813">
    <property type="term" value="P:potassium ion transport"/>
    <property type="evidence" value="ECO:0000304"/>
    <property type="project" value="ProtInc"/>
</dbReference>
<dbReference type="GO" id="GO:0048169">
    <property type="term" value="P:regulation of long-term neuronal synaptic plasticity"/>
    <property type="evidence" value="ECO:0007669"/>
    <property type="project" value="Ensembl"/>
</dbReference>
<dbReference type="GO" id="GO:0034765">
    <property type="term" value="P:regulation of monoatomic ion transmembrane transport"/>
    <property type="evidence" value="ECO:0000318"/>
    <property type="project" value="GO_Central"/>
</dbReference>
<dbReference type="GO" id="GO:0060075">
    <property type="term" value="P:regulation of resting membrane potential"/>
    <property type="evidence" value="ECO:0007669"/>
    <property type="project" value="Ensembl"/>
</dbReference>
<dbReference type="GO" id="GO:0007601">
    <property type="term" value="P:visual perception"/>
    <property type="evidence" value="ECO:0007669"/>
    <property type="project" value="Ensembl"/>
</dbReference>
<dbReference type="FunFam" id="1.10.287.70:FF:000036">
    <property type="entry name" value="ATP-sensitive inward rectifier potassium channel 1"/>
    <property type="match status" value="1"/>
</dbReference>
<dbReference type="FunFam" id="2.60.40.1400:FF:000002">
    <property type="entry name" value="ATP-sensitive inward rectifier potassium channel 1"/>
    <property type="match status" value="1"/>
</dbReference>
<dbReference type="Gene3D" id="1.10.287.70">
    <property type="match status" value="1"/>
</dbReference>
<dbReference type="Gene3D" id="2.60.40.1400">
    <property type="entry name" value="G protein-activated inward rectifier potassium channel 1"/>
    <property type="match status" value="1"/>
</dbReference>
<dbReference type="InterPro" id="IPR014756">
    <property type="entry name" value="Ig_E-set"/>
</dbReference>
<dbReference type="InterPro" id="IPR041647">
    <property type="entry name" value="IRK_C"/>
</dbReference>
<dbReference type="InterPro" id="IPR016449">
    <property type="entry name" value="K_chnl_inward-rec_Kir"/>
</dbReference>
<dbReference type="InterPro" id="IPR003269">
    <property type="entry name" value="K_chnl_inward-rec_Kir1.2"/>
</dbReference>
<dbReference type="InterPro" id="IPR013518">
    <property type="entry name" value="K_chnl_inward-rec_Kir_cyto"/>
</dbReference>
<dbReference type="InterPro" id="IPR040445">
    <property type="entry name" value="Kir_TM"/>
</dbReference>
<dbReference type="PANTHER" id="PTHR11767:SF21">
    <property type="entry name" value="ATP-SENSITIVE INWARD RECTIFIER POTASSIUM CHANNEL 10"/>
    <property type="match status" value="1"/>
</dbReference>
<dbReference type="PANTHER" id="PTHR11767">
    <property type="entry name" value="INWARD RECTIFIER POTASSIUM CHANNEL"/>
    <property type="match status" value="1"/>
</dbReference>
<dbReference type="Pfam" id="PF01007">
    <property type="entry name" value="IRK"/>
    <property type="match status" value="1"/>
</dbReference>
<dbReference type="Pfam" id="PF17655">
    <property type="entry name" value="IRK_C"/>
    <property type="match status" value="1"/>
</dbReference>
<dbReference type="PIRSF" id="PIRSF005465">
    <property type="entry name" value="GIRK_kir"/>
    <property type="match status" value="1"/>
</dbReference>
<dbReference type="PRINTS" id="PR01322">
    <property type="entry name" value="KIR12CHANNEL"/>
</dbReference>
<dbReference type="PRINTS" id="PR01320">
    <property type="entry name" value="KIRCHANNEL"/>
</dbReference>
<dbReference type="SUPFAM" id="SSF81296">
    <property type="entry name" value="E set domains"/>
    <property type="match status" value="1"/>
</dbReference>
<dbReference type="SUPFAM" id="SSF81324">
    <property type="entry name" value="Voltage-gated potassium channels"/>
    <property type="match status" value="1"/>
</dbReference>
<keyword id="KW-0067">ATP-binding</keyword>
<keyword id="KW-1003">Cell membrane</keyword>
<keyword id="KW-0209">Deafness</keyword>
<keyword id="KW-0225">Disease variant</keyword>
<keyword id="KW-1015">Disulfide bond</keyword>
<keyword id="KW-0887">Epilepsy</keyword>
<keyword id="KW-0991">Intellectual disability</keyword>
<keyword id="KW-0407">Ion channel</keyword>
<keyword id="KW-0406">Ion transport</keyword>
<keyword id="KW-0472">Membrane</keyword>
<keyword id="KW-0547">Nucleotide-binding</keyword>
<keyword id="KW-0630">Potassium</keyword>
<keyword id="KW-0633">Potassium transport</keyword>
<keyword id="KW-1267">Proteomics identification</keyword>
<keyword id="KW-1185">Reference proteome</keyword>
<keyword id="KW-0812">Transmembrane</keyword>
<keyword id="KW-1133">Transmembrane helix</keyword>
<keyword id="KW-0813">Transport</keyword>
<keyword id="KW-0851">Voltage-gated channel</keyword>
<comment type="function">
    <text evidence="2 14 17">May be responsible for potassium buffering action of glial cells in the brain (By similarity). Inward rectifier potassium channels are characterized by a greater tendency to allow potassium to flow into the cell rather than out of it (PubMed:8995301). Their voltage dependence is regulated by the concentration of extracellular potassium; as external potassium is raised, the voltage range of the channel opening shifts to more positive voltages (PubMed:8995301). The inward rectification is mainly due to the blockage of outward current by internal magnesium. Can be blocked by extracellular barium and cesium (PubMed:8995301). In the kidney, together with KCNJ16, mediates basolateral K(+) recycling in distal tubules; this process is critical for Na(+) reabsorption at the tubules (PubMed:24561201).</text>
</comment>
<comment type="catalytic activity">
    <reaction evidence="7 14">
        <text>K(+)(in) = K(+)(out)</text>
        <dbReference type="Rhea" id="RHEA:29463"/>
        <dbReference type="ChEBI" id="CHEBI:29103"/>
    </reaction>
</comment>
<comment type="activity regulation">
    <text evidence="2 8 14">Channel activity is strongly regulated by variations of cytosolic pH; channels are activated by alkaline and inhibited by acidic pH values (PubMed:20651251). Inhibited by Ba(2+) and Cs(+) (PubMed:8995301). Activated by phosphatidylinositol 4,5 biphosphate (PtdIns(4,5)P2) (By similarity).</text>
</comment>
<comment type="subunit">
    <text evidence="2 3 12">Homotetramer (By similarity). In kidney cells, it forms heteromeric channels with Kir5.1/KCNJ16; this interaction is required for KCNJ16 localization to the basolateral membrane. Interacts with MAGI1, alone and possibly as a heteromer with KCNJ16; this interaction may facilitate KCNJ10/KCNJ16 potassium channel expression at the basolateral membrane in kidney cells (PubMed:24561201). Interacts with PATJ (By similarity).</text>
</comment>
<comment type="interaction">
    <interactant intactId="EBI-9117877">
        <id>P78508</id>
    </interactant>
    <interactant intactId="EBI-747107">
        <id>Q8IUQ4</id>
        <label>SIAH1</label>
    </interactant>
    <organismsDiffer>false</organismsDiffer>
    <experiments>3</experiments>
</comment>
<comment type="interaction">
    <interactant intactId="EBI-9117877">
        <id>P78508</id>
    </interactant>
    <interactant intactId="EBI-34580021">
        <id>A0A8I3NPD4</id>
        <label>MAGI1</label>
    </interactant>
    <organismsDiffer>true</organismsDiffer>
    <experiments>2</experiments>
</comment>
<comment type="subcellular location">
    <subcellularLocation>
        <location evidence="12">Membrane</location>
        <topology>Multi-pass membrane protein</topology>
    </subcellularLocation>
    <subcellularLocation>
        <location evidence="12">Basolateral cell membrane</location>
    </subcellularLocation>
    <text evidence="12">In kidney distal convoluted tubules, located in the basolateral membrane where it colocalizes with KCNJ16.</text>
</comment>
<comment type="tissue specificity">
    <text evidence="8 12">Expressed in kidney (at protein level) (PubMed:24561201). In the nephron, expressed in the distal convoluted tubule, the connecting tubule, the collecting duct and cortical thick ascending limbs (PubMed:20651251).</text>
</comment>
<comment type="disease" evidence="6 7 8 9 10 11 12">
    <disease id="DI-02543">
        <name>Seizures, sensorineural deafness, ataxia, impaired intellectual development, and electrolyte imbalance</name>
        <acronym>SESAMES</acronym>
        <description>A complex disorder characterized by generalized seizures with onset in infancy, delayed psychomotor development, ataxia, sensorineural hearing loss, hypokalemia, metabolic alkalosis, and hypomagnesemia.</description>
        <dbReference type="MIM" id="612780"/>
    </disease>
    <text>The disease is caused by variants affecting the gene represented in this entry.</text>
</comment>
<comment type="similarity">
    <text evidence="16">Belongs to the inward rectifier-type potassium channel (TC 1.A.2.1) family. KCNJ10 subfamily.</text>
</comment>
<comment type="sequence caution" evidence="16">
    <conflict type="erroneous initiation">
        <sequence resource="EMBL-CDS" id="AAH34036"/>
    </conflict>
    <text>Extended N-terminus.</text>
</comment>
<feature type="chain" id="PRO_0000154953" description="ATP-sensitive inward rectifier potassium channel 10">
    <location>
        <begin position="1"/>
        <end position="379"/>
    </location>
</feature>
<feature type="topological domain" description="Cytoplasmic" evidence="16">
    <location>
        <begin position="1"/>
        <end position="61"/>
    </location>
</feature>
<feature type="transmembrane region" description="Helical; Name=M1" evidence="2">
    <location>
        <begin position="62"/>
        <end position="88"/>
    </location>
</feature>
<feature type="topological domain" description="Extracellular" evidence="16">
    <location>
        <begin position="89"/>
        <end position="114"/>
    </location>
</feature>
<feature type="intramembrane region" description="Discontinuously helical; Pore-forming" evidence="2">
    <location>
        <begin position="115"/>
        <end position="131"/>
    </location>
</feature>
<feature type="topological domain" description="Extracellular" evidence="16">
    <location>
        <begin position="132"/>
        <end position="140"/>
    </location>
</feature>
<feature type="transmembrane region" description="Helical; Name=M2" evidence="2">
    <location>
        <begin position="141"/>
        <end position="166"/>
    </location>
</feature>
<feature type="topological domain" description="Cytoplasmic" evidence="16">
    <location>
        <begin position="167"/>
        <end position="379"/>
    </location>
</feature>
<feature type="short sequence motif" description="Selectivity filter" evidence="1">
    <location>
        <begin position="128"/>
        <end position="133"/>
    </location>
</feature>
<feature type="binding site" evidence="2">
    <location>
        <position position="36"/>
    </location>
    <ligand>
        <name>1,2-dioctanoyl-sn-glycero-3-phospho-(1D-myo-inositol-4,5-bisphosphate)</name>
        <dbReference type="ChEBI" id="CHEBI:83419"/>
    </ligand>
</feature>
<feature type="binding site" evidence="2">
    <location>
        <position position="168"/>
    </location>
    <ligand>
        <name>1,2-dioctanoyl-sn-glycero-3-phospho-(1D-myo-inositol-4,5-bisphosphate)</name>
        <dbReference type="ChEBI" id="CHEBI:83419"/>
    </ligand>
</feature>
<feature type="binding site" evidence="2">
    <location>
        <position position="171"/>
    </location>
    <ligand>
        <name>1,2-dioctanoyl-sn-glycero-3-phospho-(1D-myo-inositol-4,5-bisphosphate)</name>
        <dbReference type="ChEBI" id="CHEBI:83419"/>
    </ligand>
</feature>
<feature type="binding site" evidence="2">
    <location>
        <position position="173"/>
    </location>
    <ligand>
        <name>1,2-dioctanoyl-sn-glycero-3-phospho-(1D-myo-inositol-4,5-bisphosphate)</name>
        <dbReference type="ChEBI" id="CHEBI:83419"/>
    </ligand>
</feature>
<feature type="binding site" evidence="4">
    <location>
        <begin position="210"/>
        <end position="217"/>
    </location>
    <ligand>
        <name>ATP</name>
        <dbReference type="ChEBI" id="CHEBI:30616"/>
    </ligand>
</feature>
<feature type="site" description="Role in the control of polyamine-mediated channel gating and in the blocking by intracellular magnesium" evidence="1">
    <location>
        <position position="158"/>
    </location>
</feature>
<feature type="disulfide bond" evidence="2">
    <location>
        <begin position="108"/>
        <end position="140"/>
    </location>
</feature>
<feature type="sequence variant" id="VAR_089945" description="In SESAMES; likely pathogenic; severely decreased potassium ion import across the plasma membrane when mutant channels are expressed in Xenopus oocytes." evidence="10">
    <original>R</original>
    <variation>C</variation>
    <location>
        <position position="65"/>
    </location>
</feature>
<feature type="sequence variant" id="VAR_063059" description="In SESAMES; pathogenic; decreased potassium ion import across the plasma membrane when mutant channels are expressed in Xenopus oocytes; results in decreased channel activity and a shift to a more alkaline pH for activation; no effect on localization to the basolateral membrane in kidney cells; dbSNP:rs137853066." evidence="6 7 8 12">
    <original>R</original>
    <variation>P</variation>
    <location>
        <position position="65"/>
    </location>
</feature>
<feature type="sequence variant" id="VAR_072746" description="In SESAMES." evidence="11">
    <original>L</original>
    <variation>P</variation>
    <location>
        <position position="68"/>
    </location>
</feature>
<feature type="sequence variant" id="VAR_089946" description="In SESAMES; likely pathogenic; severely decreased potassium ion import across the plasma membrane when mutant channels are expressed in Xenopus oocytes." evidence="10">
    <original>F</original>
    <variation>L</variation>
    <location>
        <position position="75"/>
    </location>
</feature>
<feature type="sequence variant" id="VAR_063060" description="In SESAMES; likely pathogenic; results in severely decreased potassium ion import across the plasma membrane when mutant channels are expressed in a heterologous system; severely decreased channel activity; important loss of localization to the basolateral membrane in kidney cells; dbSNP:rs137853072." evidence="7 8 12">
    <original>G</original>
    <variation>R</variation>
    <location>
        <position position="77"/>
    </location>
</feature>
<feature type="sequence variant" id="VAR_072747" description="In SESAMES; dbSNP:rs751625111." evidence="11">
    <original>I</original>
    <variation>V</variation>
    <location>
        <position position="129"/>
    </location>
</feature>
<feature type="sequence variant" id="VAR_063061" description="In SESAMES; loss of localization to the basolateral membrane in kidney cells; in non-tubular cells, does not form functional channels; the orthologous rat mutation results in loss of potassium ion transport; dbSNP:rs137853068." evidence="6 9 12">
    <original>C</original>
    <variation>R</variation>
    <location>
        <position position="140"/>
    </location>
</feature>
<feature type="sequence variant" id="VAR_063062" description="In SESAMES; no effect on localization to the basolateral membrane in kidney cells; the orthologous rat mutation results in decreased potassium ion transport and a shift to a more alkaline pH for channel activation; dbSNP:rs137853069." evidence="6 9 12">
    <original>T</original>
    <variation>I</variation>
    <location>
        <position position="164"/>
    </location>
</feature>
<feature type="sequence variant" id="VAR_063063" description="In SESAMES; loss of localization to the basolateral membrane in kidney cells; in non-tubular cells, forms functional channels; important loss of MAGI1-binding when transfected in tubular MDCKII cells, but not in non-tubular HEK293T cells; the orthologous rat mutation results in decreased potassium ion transport; dbSNP:rs137853070." evidence="6 9 12">
    <original>A</original>
    <variation>V</variation>
    <location>
        <position position="167"/>
    </location>
</feature>
<feature type="sequence variant" id="VAR_089947" description="In SESAMES; likely pathogenic; results in decreased potassium ion import across the plasma membrane when mutant channels are expressed in a heterologous system; results in decreased channel activity and a shift to a more alkaline pH for activation." evidence="8">
    <original>R</original>
    <variation>Q</variation>
    <location>
        <position position="175"/>
    </location>
</feature>
<feature type="sequence variant" id="VAR_089948" description="In SESAMES; likely pathogenic; results in loss of potassium ion import across the plasma membrane when mutant channels are expressed in a heterologous system." evidence="6 8">
    <location>
        <begin position="199"/>
        <end position="379"/>
    </location>
</feature>
<feature type="sequence variant" id="VAR_034018" description="In dbSNP:rs1130183." evidence="5">
    <original>R</original>
    <variation>C</variation>
    <location>
        <position position="271"/>
    </location>
</feature>
<feature type="sequence variant" id="VAR_020339" description="In dbSNP:rs3795339." evidence="13">
    <original>R</original>
    <variation>H</variation>
    <location>
        <position position="271"/>
    </location>
</feature>
<feature type="sequence variant" id="VAR_063064" description="In SESAMES; no effect on localization to the basolateral membrane in kidney cells; severely decreased potassium ion import across the plasma membrane when mutant channels are expressed in Xenopus oocytes; the orthologous rat mutation results in loss of potassium ion transport and a shift to a more alkaline pH for channel activation; dbSNP:rs137853071." evidence="6 9 10 12">
    <original>R</original>
    <variation>C</variation>
    <location>
        <position position="297"/>
    </location>
</feature>
<feature type="sequence conflict" description="In Ref. 2; AAB07046." evidence="16" ref="2">
    <original>L</original>
    <variation>P</variation>
    <location>
        <position position="50"/>
    </location>
</feature>
<feature type="sequence conflict" description="In Ref. 5; AAH34036." evidence="16" ref="5">
    <original>G</original>
    <variation>V</variation>
    <location>
        <position position="83"/>
    </location>
</feature>
<feature type="sequence conflict" description="In Ref. 2; AAB07046." evidence="16" ref="2">
    <original>L</original>
    <variation>Q</variation>
    <location>
        <position position="166"/>
    </location>
</feature>
<proteinExistence type="evidence at protein level"/>
<accession>P78508</accession>
<accession>A3KME7</accession>
<accession>Q5VUT9</accession>
<accession>Q8N4I7</accession>
<accession>Q92808</accession>